<sequence length="103" mass="11736">MQNQRIRIRLKAFDHRLIDQATAEIVETAKRTGAQVRGPIPLPTRKERFTVLISPHVNKDARDQYEIRTHLRLVDIVEPTEKTVDALMRLDLAAGVDVQISLG</sequence>
<evidence type="ECO:0000255" key="1">
    <source>
        <dbReference type="HAMAP-Rule" id="MF_00508"/>
    </source>
</evidence>
<evidence type="ECO:0000305" key="2"/>
<keyword id="KW-1185">Reference proteome</keyword>
<keyword id="KW-0687">Ribonucleoprotein</keyword>
<keyword id="KW-0689">Ribosomal protein</keyword>
<reference key="1">
    <citation type="journal article" date="2002" name="Proc. Natl. Acad. Sci. U.S.A.">
        <title>Extensive mosaic structure revealed by the complete genome sequence of uropathogenic Escherichia coli.</title>
        <authorList>
            <person name="Welch R.A."/>
            <person name="Burland V."/>
            <person name="Plunkett G. III"/>
            <person name="Redford P."/>
            <person name="Roesch P."/>
            <person name="Rasko D."/>
            <person name="Buckles E.L."/>
            <person name="Liou S.-R."/>
            <person name="Boutin A."/>
            <person name="Hackett J."/>
            <person name="Stroud D."/>
            <person name="Mayhew G.F."/>
            <person name="Rose D.J."/>
            <person name="Zhou S."/>
            <person name="Schwartz D.C."/>
            <person name="Perna N.T."/>
            <person name="Mobley H.L.T."/>
            <person name="Donnenberg M.S."/>
            <person name="Blattner F.R."/>
        </authorList>
    </citation>
    <scope>NUCLEOTIDE SEQUENCE [LARGE SCALE GENOMIC DNA]</scope>
    <source>
        <strain>CFT073 / ATCC 700928 / UPEC</strain>
    </source>
</reference>
<name>RS10_ECOL6</name>
<proteinExistence type="inferred from homology"/>
<comment type="function">
    <text evidence="1">Involved in the binding of tRNA to the ribosomes.</text>
</comment>
<comment type="subunit">
    <text evidence="1">Part of the 30S ribosomal subunit.</text>
</comment>
<comment type="similarity">
    <text evidence="1">Belongs to the universal ribosomal protein uS10 family.</text>
</comment>
<accession>P0A7R6</accession>
<accession>P02364</accession>
<dbReference type="EMBL" id="AE014075">
    <property type="protein sequence ID" value="AAN82530.1"/>
    <property type="molecule type" value="Genomic_DNA"/>
</dbReference>
<dbReference type="RefSeq" id="WP_001181004.1">
    <property type="nucleotide sequence ID" value="NZ_CP051263.1"/>
</dbReference>
<dbReference type="SMR" id="P0A7R6"/>
<dbReference type="STRING" id="199310.c4092"/>
<dbReference type="GeneID" id="93778666"/>
<dbReference type="KEGG" id="ecc:c4092"/>
<dbReference type="eggNOG" id="COG0051">
    <property type="taxonomic scope" value="Bacteria"/>
</dbReference>
<dbReference type="HOGENOM" id="CLU_122625_1_3_6"/>
<dbReference type="BioCyc" id="ECOL199310:C4092-MONOMER"/>
<dbReference type="Proteomes" id="UP000001410">
    <property type="component" value="Chromosome"/>
</dbReference>
<dbReference type="GO" id="GO:1990904">
    <property type="term" value="C:ribonucleoprotein complex"/>
    <property type="evidence" value="ECO:0007669"/>
    <property type="project" value="UniProtKB-KW"/>
</dbReference>
<dbReference type="GO" id="GO:0005840">
    <property type="term" value="C:ribosome"/>
    <property type="evidence" value="ECO:0007669"/>
    <property type="project" value="UniProtKB-KW"/>
</dbReference>
<dbReference type="GO" id="GO:0003735">
    <property type="term" value="F:structural constituent of ribosome"/>
    <property type="evidence" value="ECO:0007669"/>
    <property type="project" value="InterPro"/>
</dbReference>
<dbReference type="GO" id="GO:0000049">
    <property type="term" value="F:tRNA binding"/>
    <property type="evidence" value="ECO:0007669"/>
    <property type="project" value="UniProtKB-UniRule"/>
</dbReference>
<dbReference type="GO" id="GO:0006412">
    <property type="term" value="P:translation"/>
    <property type="evidence" value="ECO:0007669"/>
    <property type="project" value="UniProtKB-UniRule"/>
</dbReference>
<dbReference type="FunFam" id="3.30.70.600:FF:000001">
    <property type="entry name" value="30S ribosomal protein S10"/>
    <property type="match status" value="1"/>
</dbReference>
<dbReference type="Gene3D" id="3.30.70.600">
    <property type="entry name" value="Ribosomal protein S10 domain"/>
    <property type="match status" value="1"/>
</dbReference>
<dbReference type="HAMAP" id="MF_00508">
    <property type="entry name" value="Ribosomal_uS10"/>
    <property type="match status" value="1"/>
</dbReference>
<dbReference type="InterPro" id="IPR001848">
    <property type="entry name" value="Ribosomal_uS10"/>
</dbReference>
<dbReference type="InterPro" id="IPR018268">
    <property type="entry name" value="Ribosomal_uS10_CS"/>
</dbReference>
<dbReference type="InterPro" id="IPR027486">
    <property type="entry name" value="Ribosomal_uS10_dom"/>
</dbReference>
<dbReference type="InterPro" id="IPR036838">
    <property type="entry name" value="Ribosomal_uS10_dom_sf"/>
</dbReference>
<dbReference type="NCBIfam" id="NF001861">
    <property type="entry name" value="PRK00596.1"/>
    <property type="match status" value="1"/>
</dbReference>
<dbReference type="NCBIfam" id="TIGR01049">
    <property type="entry name" value="rpsJ_bact"/>
    <property type="match status" value="1"/>
</dbReference>
<dbReference type="PANTHER" id="PTHR11700">
    <property type="entry name" value="30S RIBOSOMAL PROTEIN S10 FAMILY MEMBER"/>
    <property type="match status" value="1"/>
</dbReference>
<dbReference type="Pfam" id="PF00338">
    <property type="entry name" value="Ribosomal_S10"/>
    <property type="match status" value="1"/>
</dbReference>
<dbReference type="PRINTS" id="PR00971">
    <property type="entry name" value="RIBOSOMALS10"/>
</dbReference>
<dbReference type="SMART" id="SM01403">
    <property type="entry name" value="Ribosomal_S10"/>
    <property type="match status" value="1"/>
</dbReference>
<dbReference type="SUPFAM" id="SSF54999">
    <property type="entry name" value="Ribosomal protein S10"/>
    <property type="match status" value="1"/>
</dbReference>
<dbReference type="PROSITE" id="PS00361">
    <property type="entry name" value="RIBOSOMAL_S10"/>
    <property type="match status" value="1"/>
</dbReference>
<gene>
    <name evidence="1" type="primary">rpsJ</name>
    <name type="synonym">nusE</name>
    <name type="ordered locus">c4092</name>
</gene>
<organism>
    <name type="scientific">Escherichia coli O6:H1 (strain CFT073 / ATCC 700928 / UPEC)</name>
    <dbReference type="NCBI Taxonomy" id="199310"/>
    <lineage>
        <taxon>Bacteria</taxon>
        <taxon>Pseudomonadati</taxon>
        <taxon>Pseudomonadota</taxon>
        <taxon>Gammaproteobacteria</taxon>
        <taxon>Enterobacterales</taxon>
        <taxon>Enterobacteriaceae</taxon>
        <taxon>Escherichia</taxon>
    </lineage>
</organism>
<protein>
    <recommendedName>
        <fullName evidence="1">Small ribosomal subunit protein uS10</fullName>
    </recommendedName>
    <alternativeName>
        <fullName evidence="2">30S ribosomal protein S10</fullName>
    </alternativeName>
</protein>
<feature type="chain" id="PRO_0000146530" description="Small ribosomal subunit protein uS10">
    <location>
        <begin position="1"/>
        <end position="103"/>
    </location>
</feature>